<dbReference type="EMBL" id="AY358435">
    <property type="protein sequence ID" value="AAQ88801.1"/>
    <property type="molecule type" value="mRNA"/>
</dbReference>
<dbReference type="EMBL" id="AC078797">
    <property type="status" value="NOT_ANNOTATED_CDS"/>
    <property type="molecule type" value="Genomic_DNA"/>
</dbReference>
<dbReference type="EMBL" id="CH471052">
    <property type="protein sequence ID" value="EAW78252.1"/>
    <property type="molecule type" value="Genomic_DNA"/>
</dbReference>
<dbReference type="EMBL" id="CH471052">
    <property type="protein sequence ID" value="EAW78254.1"/>
    <property type="molecule type" value="Genomic_DNA"/>
</dbReference>
<dbReference type="EMBL" id="CH471052">
    <property type="protein sequence ID" value="EAW78255.1"/>
    <property type="molecule type" value="Genomic_DNA"/>
</dbReference>
<dbReference type="EMBL" id="CH471052">
    <property type="protein sequence ID" value="EAW78256.1"/>
    <property type="molecule type" value="Genomic_DNA"/>
</dbReference>
<dbReference type="EMBL" id="CH471052">
    <property type="protein sequence ID" value="EAW78253.1"/>
    <property type="molecule type" value="Genomic_DNA"/>
</dbReference>
<dbReference type="EMBL" id="BC026221">
    <property type="protein sequence ID" value="AAH26221.1"/>
    <property type="molecule type" value="mRNA"/>
</dbReference>
<dbReference type="EMBL" id="BC037299">
    <property type="protein sequence ID" value="AAH37299.1"/>
    <property type="molecule type" value="mRNA"/>
</dbReference>
<dbReference type="CCDS" id="CCDS3262.2">
    <molecule id="Q6UXB0-3"/>
</dbReference>
<dbReference type="CCDS" id="CCDS54689.1">
    <molecule id="Q6UXB0-2"/>
</dbReference>
<dbReference type="RefSeq" id="NP_001164564.1">
    <molecule id="Q6UXB0-2"/>
    <property type="nucleotide sequence ID" value="NM_001171093.2"/>
</dbReference>
<dbReference type="RefSeq" id="NP_001353062.1">
    <molecule id="Q6UXB0-2"/>
    <property type="nucleotide sequence ID" value="NM_001366133.1"/>
</dbReference>
<dbReference type="RefSeq" id="NP_001353063.1">
    <molecule id="Q6UXB0-2"/>
    <property type="nucleotide sequence ID" value="NM_001366134.1"/>
</dbReference>
<dbReference type="RefSeq" id="NP_653236.3">
    <molecule id="Q6UXB0-3"/>
    <property type="nucleotide sequence ID" value="NM_144635.4"/>
</dbReference>
<dbReference type="RefSeq" id="XP_005247170.1">
    <property type="nucleotide sequence ID" value="XM_005247113.2"/>
</dbReference>
<dbReference type="RefSeq" id="XP_005247171.1">
    <molecule id="Q6UXB0-2"/>
    <property type="nucleotide sequence ID" value="XM_005247114.4"/>
</dbReference>
<dbReference type="RefSeq" id="XP_011510715.1">
    <property type="nucleotide sequence ID" value="XM_011512413.2"/>
</dbReference>
<dbReference type="RefSeq" id="XP_047303393.1">
    <molecule id="Q6UXB0-3"/>
    <property type="nucleotide sequence ID" value="XM_047447437.1"/>
</dbReference>
<dbReference type="RefSeq" id="XP_054201194.1">
    <molecule id="Q6UXB0-2"/>
    <property type="nucleotide sequence ID" value="XM_054345219.1"/>
</dbReference>
<dbReference type="BioGRID" id="126280">
    <property type="interactions" value="6"/>
</dbReference>
<dbReference type="FunCoup" id="Q6UXB0">
    <property type="interactions" value="50"/>
</dbReference>
<dbReference type="IntAct" id="Q6UXB0">
    <property type="interactions" value="2"/>
</dbReference>
<dbReference type="STRING" id="9606.ENSP00000373360"/>
<dbReference type="iPTMnet" id="Q6UXB0"/>
<dbReference type="BioMuta" id="FAM131A"/>
<dbReference type="DMDM" id="74738196"/>
<dbReference type="MassIVE" id="Q6UXB0"/>
<dbReference type="PaxDb" id="9606-ENSP00000373360"/>
<dbReference type="PeptideAtlas" id="Q6UXB0"/>
<dbReference type="ProteomicsDB" id="33886"/>
<dbReference type="ProteomicsDB" id="67580">
    <molecule id="Q6UXB0-1"/>
</dbReference>
<dbReference type="ProteomicsDB" id="67581">
    <molecule id="Q6UXB0-2"/>
</dbReference>
<dbReference type="Antibodypedia" id="52588">
    <property type="antibodies" value="43 antibodies from 11 providers"/>
</dbReference>
<dbReference type="DNASU" id="131408"/>
<dbReference type="Ensembl" id="ENST00000310585.4">
    <molecule id="Q6UXB0-1"/>
    <property type="protein sequence ID" value="ENSP00000310135.4"/>
    <property type="gene ID" value="ENSG00000175182.15"/>
</dbReference>
<dbReference type="Ensembl" id="ENST00000340957.9">
    <molecule id="Q6UXB0-2"/>
    <property type="protein sequence ID" value="ENSP00000340974.5"/>
    <property type="gene ID" value="ENSG00000175182.15"/>
</dbReference>
<dbReference type="Ensembl" id="ENST00000383847.7">
    <molecule id="Q6UXB0-3"/>
    <property type="protein sequence ID" value="ENSP00000373360.2"/>
    <property type="gene ID" value="ENSG00000175182.15"/>
</dbReference>
<dbReference type="Ensembl" id="ENST00000450976.5">
    <molecule id="Q6UXB0-2"/>
    <property type="protein sequence ID" value="ENSP00000388551.1"/>
    <property type="gene ID" value="ENSG00000175182.15"/>
</dbReference>
<dbReference type="Ensembl" id="ENST00000453072.5">
    <molecule id="Q6UXB0-2"/>
    <property type="protein sequence ID" value="ENSP00000390588.1"/>
    <property type="gene ID" value="ENSG00000175182.15"/>
</dbReference>
<dbReference type="GeneID" id="131408"/>
<dbReference type="KEGG" id="hsa:131408"/>
<dbReference type="MANE-Select" id="ENST00000383847.7">
    <property type="protein sequence ID" value="ENSP00000373360.2"/>
    <property type="RefSeq nucleotide sequence ID" value="NM_144635.5"/>
    <property type="RefSeq protein sequence ID" value="NP_653236.3"/>
</dbReference>
<dbReference type="UCSC" id="uc003foc.4">
    <molecule id="Q6UXB0-3"/>
    <property type="organism name" value="human"/>
</dbReference>
<dbReference type="AGR" id="HGNC:28308"/>
<dbReference type="CTD" id="131408"/>
<dbReference type="GeneCards" id="FAM131A"/>
<dbReference type="HGNC" id="HGNC:28308">
    <property type="gene designation" value="FAM131A"/>
</dbReference>
<dbReference type="HPA" id="ENSG00000175182">
    <property type="expression patterns" value="Tissue enhanced (brain)"/>
</dbReference>
<dbReference type="neXtProt" id="NX_Q6UXB0"/>
<dbReference type="OpenTargets" id="ENSG00000175182"/>
<dbReference type="PharmGKB" id="PA162386054"/>
<dbReference type="VEuPathDB" id="HostDB:ENSG00000175182"/>
<dbReference type="eggNOG" id="ENOG502QR3P">
    <property type="taxonomic scope" value="Eukaryota"/>
</dbReference>
<dbReference type="GeneTree" id="ENSGT00950000183106"/>
<dbReference type="HOGENOM" id="CLU_074265_0_0_1"/>
<dbReference type="InParanoid" id="Q6UXB0"/>
<dbReference type="OMA" id="ACISQVV"/>
<dbReference type="OrthoDB" id="8903525at2759"/>
<dbReference type="PAN-GO" id="Q6UXB0">
    <property type="GO annotations" value="0 GO annotations based on evolutionary models"/>
</dbReference>
<dbReference type="PhylomeDB" id="Q6UXB0"/>
<dbReference type="TreeFam" id="TF331537"/>
<dbReference type="PathwayCommons" id="Q6UXB0"/>
<dbReference type="SignaLink" id="Q6UXB0"/>
<dbReference type="BioGRID-ORCS" id="131408">
    <property type="hits" value="8 hits in 1154 CRISPR screens"/>
</dbReference>
<dbReference type="ChiTaRS" id="FAM131A">
    <property type="organism name" value="human"/>
</dbReference>
<dbReference type="GenomeRNAi" id="131408"/>
<dbReference type="Pharos" id="Q6UXB0">
    <property type="development level" value="Tdark"/>
</dbReference>
<dbReference type="PRO" id="PR:Q6UXB0"/>
<dbReference type="Proteomes" id="UP000005640">
    <property type="component" value="Chromosome 3"/>
</dbReference>
<dbReference type="RNAct" id="Q6UXB0">
    <property type="molecule type" value="protein"/>
</dbReference>
<dbReference type="Bgee" id="ENSG00000175182">
    <property type="expression patterns" value="Expressed in prefrontal cortex and 202 other cell types or tissues"/>
</dbReference>
<dbReference type="ExpressionAtlas" id="Q6UXB0">
    <property type="expression patterns" value="baseline and differential"/>
</dbReference>
<dbReference type="InterPro" id="IPR026782">
    <property type="entry name" value="FAM131"/>
</dbReference>
<dbReference type="PANTHER" id="PTHR15736:SF4">
    <property type="entry name" value="PROTEIN FAM131A"/>
    <property type="match status" value="1"/>
</dbReference>
<dbReference type="PANTHER" id="PTHR15736">
    <property type="entry name" value="PROTEIN FAM131B-RELATED"/>
    <property type="match status" value="1"/>
</dbReference>
<dbReference type="Pfam" id="PF15010">
    <property type="entry name" value="FAM131"/>
    <property type="match status" value="1"/>
</dbReference>
<accession>Q6UXB0</accession>
<accession>D3DNT6</accession>
<accession>G5E9B1</accession>
<accession>Q8TA84</accession>
<evidence type="ECO:0000256" key="1">
    <source>
        <dbReference type="SAM" id="MobiDB-lite"/>
    </source>
</evidence>
<evidence type="ECO:0000269" key="2">
    <source>
    </source>
</evidence>
<evidence type="ECO:0000305" key="3"/>
<protein>
    <recommendedName>
        <fullName>Protein FAM131A</fullName>
    </recommendedName>
</protein>
<name>F131A_HUMAN</name>
<keyword id="KW-0025">Alternative splicing</keyword>
<keyword id="KW-1267">Proteomics identification</keyword>
<keyword id="KW-1185">Reference proteome</keyword>
<reference key="1">
    <citation type="journal article" date="2003" name="Genome Res.">
        <title>The secreted protein discovery initiative (SPDI), a large-scale effort to identify novel human secreted and transmembrane proteins: a bioinformatics assessment.</title>
        <authorList>
            <person name="Clark H.F."/>
            <person name="Gurney A.L."/>
            <person name="Abaya E."/>
            <person name="Baker K."/>
            <person name="Baldwin D.T."/>
            <person name="Brush J."/>
            <person name="Chen J."/>
            <person name="Chow B."/>
            <person name="Chui C."/>
            <person name="Crowley C."/>
            <person name="Currell B."/>
            <person name="Deuel B."/>
            <person name="Dowd P."/>
            <person name="Eaton D."/>
            <person name="Foster J.S."/>
            <person name="Grimaldi C."/>
            <person name="Gu Q."/>
            <person name="Hass P.E."/>
            <person name="Heldens S."/>
            <person name="Huang A."/>
            <person name="Kim H.S."/>
            <person name="Klimowski L."/>
            <person name="Jin Y."/>
            <person name="Johnson S."/>
            <person name="Lee J."/>
            <person name="Lewis L."/>
            <person name="Liao D."/>
            <person name="Mark M.R."/>
            <person name="Robbie E."/>
            <person name="Sanchez C."/>
            <person name="Schoenfeld J."/>
            <person name="Seshagiri S."/>
            <person name="Simmons L."/>
            <person name="Singh J."/>
            <person name="Smith V."/>
            <person name="Stinson J."/>
            <person name="Vagts A."/>
            <person name="Vandlen R.L."/>
            <person name="Watanabe C."/>
            <person name="Wieand D."/>
            <person name="Woods K."/>
            <person name="Xie M.-H."/>
            <person name="Yansura D.G."/>
            <person name="Yi S."/>
            <person name="Yu G."/>
            <person name="Yuan J."/>
            <person name="Zhang M."/>
            <person name="Zhang Z."/>
            <person name="Goddard A.D."/>
            <person name="Wood W.I."/>
            <person name="Godowski P.J."/>
            <person name="Gray A.M."/>
        </authorList>
    </citation>
    <scope>NUCLEOTIDE SEQUENCE [LARGE SCALE MRNA] (ISOFORM 1)</scope>
</reference>
<reference key="2">
    <citation type="journal article" date="2006" name="Nature">
        <title>The DNA sequence, annotation and analysis of human chromosome 3.</title>
        <authorList>
            <person name="Muzny D.M."/>
            <person name="Scherer S.E."/>
            <person name="Kaul R."/>
            <person name="Wang J."/>
            <person name="Yu J."/>
            <person name="Sudbrak R."/>
            <person name="Buhay C.J."/>
            <person name="Chen R."/>
            <person name="Cree A."/>
            <person name="Ding Y."/>
            <person name="Dugan-Rocha S."/>
            <person name="Gill R."/>
            <person name="Gunaratne P."/>
            <person name="Harris R.A."/>
            <person name="Hawes A.C."/>
            <person name="Hernandez J."/>
            <person name="Hodgson A.V."/>
            <person name="Hume J."/>
            <person name="Jackson A."/>
            <person name="Khan Z.M."/>
            <person name="Kovar-Smith C."/>
            <person name="Lewis L.R."/>
            <person name="Lozado R.J."/>
            <person name="Metzker M.L."/>
            <person name="Milosavljevic A."/>
            <person name="Miner G.R."/>
            <person name="Morgan M.B."/>
            <person name="Nazareth L.V."/>
            <person name="Scott G."/>
            <person name="Sodergren E."/>
            <person name="Song X.-Z."/>
            <person name="Steffen D."/>
            <person name="Wei S."/>
            <person name="Wheeler D.A."/>
            <person name="Wright M.W."/>
            <person name="Worley K.C."/>
            <person name="Yuan Y."/>
            <person name="Zhang Z."/>
            <person name="Adams C.Q."/>
            <person name="Ansari-Lari M.A."/>
            <person name="Ayele M."/>
            <person name="Brown M.J."/>
            <person name="Chen G."/>
            <person name="Chen Z."/>
            <person name="Clendenning J."/>
            <person name="Clerc-Blankenburg K.P."/>
            <person name="Chen R."/>
            <person name="Chen Z."/>
            <person name="Davis C."/>
            <person name="Delgado O."/>
            <person name="Dinh H.H."/>
            <person name="Dong W."/>
            <person name="Draper H."/>
            <person name="Ernst S."/>
            <person name="Fu G."/>
            <person name="Gonzalez-Garay M.L."/>
            <person name="Garcia D.K."/>
            <person name="Gillett W."/>
            <person name="Gu J."/>
            <person name="Hao B."/>
            <person name="Haugen E."/>
            <person name="Havlak P."/>
            <person name="He X."/>
            <person name="Hennig S."/>
            <person name="Hu S."/>
            <person name="Huang W."/>
            <person name="Jackson L.R."/>
            <person name="Jacob L.S."/>
            <person name="Kelly S.H."/>
            <person name="Kube M."/>
            <person name="Levy R."/>
            <person name="Li Z."/>
            <person name="Liu B."/>
            <person name="Liu J."/>
            <person name="Liu W."/>
            <person name="Lu J."/>
            <person name="Maheshwari M."/>
            <person name="Nguyen B.-V."/>
            <person name="Okwuonu G.O."/>
            <person name="Palmeiri A."/>
            <person name="Pasternak S."/>
            <person name="Perez L.M."/>
            <person name="Phelps K.A."/>
            <person name="Plopper F.J."/>
            <person name="Qiang B."/>
            <person name="Raymond C."/>
            <person name="Rodriguez R."/>
            <person name="Saenphimmachak C."/>
            <person name="Santibanez J."/>
            <person name="Shen H."/>
            <person name="Shen Y."/>
            <person name="Subramanian S."/>
            <person name="Tabor P.E."/>
            <person name="Verduzco D."/>
            <person name="Waldron L."/>
            <person name="Wang J."/>
            <person name="Wang J."/>
            <person name="Wang Q."/>
            <person name="Williams G.A."/>
            <person name="Wong G.K.-S."/>
            <person name="Yao Z."/>
            <person name="Zhang J."/>
            <person name="Zhang X."/>
            <person name="Zhao G."/>
            <person name="Zhou J."/>
            <person name="Zhou Y."/>
            <person name="Nelson D."/>
            <person name="Lehrach H."/>
            <person name="Reinhardt R."/>
            <person name="Naylor S.L."/>
            <person name="Yang H."/>
            <person name="Olson M."/>
            <person name="Weinstock G."/>
            <person name="Gibbs R.A."/>
        </authorList>
    </citation>
    <scope>NUCLEOTIDE SEQUENCE [LARGE SCALE GENOMIC DNA]</scope>
</reference>
<reference key="3">
    <citation type="submission" date="2005-09" db="EMBL/GenBank/DDBJ databases">
        <authorList>
            <person name="Mural R.J."/>
            <person name="Istrail S."/>
            <person name="Sutton G.G."/>
            <person name="Florea L."/>
            <person name="Halpern A.L."/>
            <person name="Mobarry C.M."/>
            <person name="Lippert R."/>
            <person name="Walenz B."/>
            <person name="Shatkay H."/>
            <person name="Dew I."/>
            <person name="Miller J.R."/>
            <person name="Flanigan M.J."/>
            <person name="Edwards N.J."/>
            <person name="Bolanos R."/>
            <person name="Fasulo D."/>
            <person name="Halldorsson B.V."/>
            <person name="Hannenhalli S."/>
            <person name="Turner R."/>
            <person name="Yooseph S."/>
            <person name="Lu F."/>
            <person name="Nusskern D.R."/>
            <person name="Shue B.C."/>
            <person name="Zheng X.H."/>
            <person name="Zhong F."/>
            <person name="Delcher A.L."/>
            <person name="Huson D.H."/>
            <person name="Kravitz S.A."/>
            <person name="Mouchard L."/>
            <person name="Reinert K."/>
            <person name="Remington K.A."/>
            <person name="Clark A.G."/>
            <person name="Waterman M.S."/>
            <person name="Eichler E.E."/>
            <person name="Adams M.D."/>
            <person name="Hunkapiller M.W."/>
            <person name="Myers E.W."/>
            <person name="Venter J.C."/>
        </authorList>
    </citation>
    <scope>NUCLEOTIDE SEQUENCE [LARGE SCALE GENOMIC DNA]</scope>
</reference>
<reference key="4">
    <citation type="journal article" date="2004" name="Genome Res.">
        <title>The status, quality, and expansion of the NIH full-length cDNA project: the Mammalian Gene Collection (MGC).</title>
        <authorList>
            <consortium name="The MGC Project Team"/>
        </authorList>
    </citation>
    <scope>NUCLEOTIDE SEQUENCE [LARGE SCALE MRNA] (ISOFORM 2)</scope>
    <scope>NUCLEOTIDE SEQUENCE [LARGE SCALE MRNA] OF 74-366 (ISOFORM 3)</scope>
    <source>
        <tissue>Duodenum</tissue>
        <tissue>Testis</tissue>
    </source>
</reference>
<reference key="5">
    <citation type="journal article" date="2006" name="Science">
        <title>The consensus coding sequences of human breast and colorectal cancers.</title>
        <authorList>
            <person name="Sjoeblom T."/>
            <person name="Jones S."/>
            <person name="Wood L.D."/>
            <person name="Parsons D.W."/>
            <person name="Lin J."/>
            <person name="Barber T.D."/>
            <person name="Mandelker D."/>
            <person name="Leary R.J."/>
            <person name="Ptak J."/>
            <person name="Silliman N."/>
            <person name="Szabo S."/>
            <person name="Buckhaults P."/>
            <person name="Farrell C."/>
            <person name="Meeh P."/>
            <person name="Markowitz S.D."/>
            <person name="Willis J."/>
            <person name="Dawson D."/>
            <person name="Willson J.K.V."/>
            <person name="Gazdar A.F."/>
            <person name="Hartigan J."/>
            <person name="Wu L."/>
            <person name="Liu C."/>
            <person name="Parmigiani G."/>
            <person name="Park B.H."/>
            <person name="Bachman K.E."/>
            <person name="Papadopoulos N."/>
            <person name="Vogelstein B."/>
            <person name="Kinzler K.W."/>
            <person name="Velculescu V.E."/>
        </authorList>
    </citation>
    <scope>VARIANT [LARGE SCALE ANALYSIS] ASN-291</scope>
</reference>
<gene>
    <name type="primary">FAM131A</name>
    <name type="synonym">C3orf40</name>
    <name type="ORF">UNQ715/PRO1378</name>
</gene>
<organism>
    <name type="scientific">Homo sapiens</name>
    <name type="common">Human</name>
    <dbReference type="NCBI Taxonomy" id="9606"/>
    <lineage>
        <taxon>Eukaryota</taxon>
        <taxon>Metazoa</taxon>
        <taxon>Chordata</taxon>
        <taxon>Craniata</taxon>
        <taxon>Vertebrata</taxon>
        <taxon>Euteleostomi</taxon>
        <taxon>Mammalia</taxon>
        <taxon>Eutheria</taxon>
        <taxon>Euarchontoglires</taxon>
        <taxon>Primates</taxon>
        <taxon>Haplorrhini</taxon>
        <taxon>Catarrhini</taxon>
        <taxon>Hominidae</taxon>
        <taxon>Homo</taxon>
    </lineage>
</organism>
<comment type="alternative products">
    <event type="alternative splicing"/>
    <isoform>
        <id>Q6UXB0-3</id>
        <name>3</name>
        <sequence type="displayed"/>
    </isoform>
    <isoform>
        <id>Q6UXB0-1</id>
        <name>1</name>
        <sequence type="described" ref="VSP_059988"/>
    </isoform>
    <isoform>
        <id>Q6UXB0-2</id>
        <name>2</name>
        <sequence type="described" ref="VSP_059989"/>
    </isoform>
</comment>
<comment type="similarity">
    <text evidence="3">Belongs to the FAM131 family.</text>
</comment>
<sequence length="366" mass="39503">MPMISVLGKMFLWQREGPGGRWTCQTSRRVSSDPAWAVEWIELPRGLSLSSLGSARTLRGWSRSSRPSSVDSQDLPEVNVGDTVAMLPKSRRALTIQEIAALARSSLHGISQVVKDHVTKPTAMAQGRVAHLIEWKGWSKPSDSPAALESAFSSYSDLSEGEQEARFAAGVAEQFAIAEAKLRAWSSVDGEDSTDDSYDEDFAGGMDTDMAGQLPLGPHLQDLFTGHRFSRPVRQGSVEPESDCSQTVSPDTLCSSLCSLEDGLLGSPARLASQLLGDELLLAKLPPSRESAFRSLGPLEAQDSLYNSPLTESCLSPAEEEPAPCKDCQPLCPPLTGSWERQRQASDLASSGVVSLDEDEAEPEEQ</sequence>
<feature type="chain" id="PRO_0000243932" description="Protein FAM131A">
    <location>
        <begin position="1"/>
        <end position="366"/>
    </location>
</feature>
<feature type="region of interest" description="Disordered" evidence="1">
    <location>
        <begin position="342"/>
        <end position="366"/>
    </location>
</feature>
<feature type="compositionally biased region" description="Acidic residues" evidence="1">
    <location>
        <begin position="356"/>
        <end position="366"/>
    </location>
</feature>
<feature type="splice variant" id="VSP_059988" description="In isoform 1.">
    <original>MPMISVLGKMFLWQREGPGGRWTCQTSRRVSSDPAWAVEWIELPRGLSLSSLGSARTLRGWSRSSRPSSVDSQDLPEVNVGDTVAMLPKSRRALTIQEIAALARSSLH</original>
    <variation>MFLATLSFLLPFAHPFGTVSCEYMLGSPLSSLAQVNLSPFSHPKVHMDPNYCHPSTSLHLCSLAWSFTRLLHPPLSP</variation>
    <location>
        <begin position="1"/>
        <end position="108"/>
    </location>
</feature>
<feature type="splice variant" id="VSP_059989" description="In isoform 2.">
    <location>
        <begin position="1"/>
        <end position="85"/>
    </location>
</feature>
<feature type="sequence variant" id="VAR_036118" description="In a breast cancer sample; somatic mutation." evidence="2">
    <original>S</original>
    <variation>N</variation>
    <location>
        <position position="291"/>
    </location>
</feature>
<proteinExistence type="evidence at protein level"/>